<proteinExistence type="evidence at protein level"/>
<gene>
    <name type="primary">LysX2</name>
    <name evidence="6" type="ordered locus">Rv1619</name>
</gene>
<evidence type="ECO:0000255" key="1"/>
<evidence type="ECO:0000269" key="2">
    <source>
    </source>
</evidence>
<evidence type="ECO:0000303" key="3">
    <source>
    </source>
</evidence>
<evidence type="ECO:0000305" key="4"/>
<evidence type="ECO:0000305" key="5">
    <source>
    </source>
</evidence>
<evidence type="ECO:0000312" key="6">
    <source>
        <dbReference type="EMBL" id="CCP44383.1"/>
    </source>
</evidence>
<keyword id="KW-0997">Cell inner membrane</keyword>
<keyword id="KW-1003">Cell membrane</keyword>
<keyword id="KW-0472">Membrane</keyword>
<keyword id="KW-1185">Reference proteome</keyword>
<keyword id="KW-0812">Transmembrane</keyword>
<keyword id="KW-1133">Transmembrane helix</keyword>
<accession>O06136</accession>
<accession>F2GKS1</accession>
<accession>I6Y707</accession>
<accession>Q7D896</accession>
<name>LYSX2_MYCTU</name>
<comment type="function">
    <text evidence="2">Plays a role in mycobacterial fitness (PubMed:35365094). Likely enhances survival of pathogenic strains (PubMed:35365094). Considerably reduces the overall net negative charge on bacterial surface when bacteria are exposed to an acidic environment (PubMed:35365094).</text>
</comment>
<comment type="subcellular location">
    <subcellularLocation>
        <location evidence="2">Cell inner membrane</location>
        <topology evidence="1">Multi-pass membrane protein</topology>
    </subcellularLocation>
</comment>
<comment type="domain">
    <text evidence="2">Unlike homologous domains of MprF and LysX that are positioned in the cytoplasm, the MprF-like domain of LysX2 is in the extracytoplasmic region.</text>
</comment>
<comment type="miscellaneous">
    <text evidence="2">Expression in M.smegmatis increases cell resistance to human beta-defensin 2 (hBD-2) and to sodium nitrite (PubMed:35365094). It also reduces the negative charge on the bacterial surface upon exposure to an acidic environment, enhances bacterial cell viability at lethal acidic pH and induces a slowdown in biofilm formation (PubMed:35365094).</text>
</comment>
<comment type="similarity">
    <text evidence="4">Belongs to the LPG synthetase family.</text>
</comment>
<protein>
    <recommendedName>
        <fullName evidence="3">MprF-like domain protein Rv1619</fullName>
    </recommendedName>
    <alternativeName>
        <fullName evidence="3">MtLysX2</fullName>
    </alternativeName>
</protein>
<organism>
    <name type="scientific">Mycobacterium tuberculosis (strain ATCC 25618 / H37Rv)</name>
    <dbReference type="NCBI Taxonomy" id="83332"/>
    <lineage>
        <taxon>Bacteria</taxon>
        <taxon>Bacillati</taxon>
        <taxon>Actinomycetota</taxon>
        <taxon>Actinomycetes</taxon>
        <taxon>Mycobacteriales</taxon>
        <taxon>Mycobacteriaceae</taxon>
        <taxon>Mycobacterium</taxon>
        <taxon>Mycobacterium tuberculosis complex</taxon>
    </lineage>
</organism>
<dbReference type="EMBL" id="AL123456">
    <property type="protein sequence ID" value="CCP44383.1"/>
    <property type="molecule type" value="Genomic_DNA"/>
</dbReference>
<dbReference type="RefSeq" id="NP_216135.1">
    <property type="nucleotide sequence ID" value="NC_000962.3"/>
</dbReference>
<dbReference type="RefSeq" id="WP_003900378.1">
    <property type="nucleotide sequence ID" value="NZ_NVQJ01000016.1"/>
</dbReference>
<dbReference type="SMR" id="O06136"/>
<dbReference type="STRING" id="83332.Rv1619"/>
<dbReference type="PaxDb" id="83332-Rv1619"/>
<dbReference type="GeneID" id="885509"/>
<dbReference type="KEGG" id="mtu:Rv1619"/>
<dbReference type="KEGG" id="mtv:RVBD_1619"/>
<dbReference type="PATRIC" id="fig|83332.293.peg.1802"/>
<dbReference type="TubercuList" id="Rv1619"/>
<dbReference type="eggNOG" id="COG2898">
    <property type="taxonomic scope" value="Bacteria"/>
</dbReference>
<dbReference type="InParanoid" id="O06136"/>
<dbReference type="OrthoDB" id="9801152at2"/>
<dbReference type="PhylomeDB" id="O06136"/>
<dbReference type="Proteomes" id="UP000001584">
    <property type="component" value="Chromosome"/>
</dbReference>
<dbReference type="GO" id="GO:0005886">
    <property type="term" value="C:plasma membrane"/>
    <property type="evidence" value="ECO:0007005"/>
    <property type="project" value="MTBBASE"/>
</dbReference>
<dbReference type="GO" id="GO:0016755">
    <property type="term" value="F:aminoacyltransferase activity"/>
    <property type="evidence" value="ECO:0000318"/>
    <property type="project" value="GO_Central"/>
</dbReference>
<dbReference type="GO" id="GO:0055091">
    <property type="term" value="P:phospholipid homeostasis"/>
    <property type="evidence" value="ECO:0000318"/>
    <property type="project" value="GO_Central"/>
</dbReference>
<dbReference type="InterPro" id="IPR024320">
    <property type="entry name" value="LPG_synthase_C"/>
</dbReference>
<dbReference type="InterPro" id="IPR051211">
    <property type="entry name" value="PG_lysyltransferase"/>
</dbReference>
<dbReference type="PANTHER" id="PTHR34697">
    <property type="entry name" value="PHOSPHATIDYLGLYCEROL LYSYLTRANSFERASE"/>
    <property type="match status" value="1"/>
</dbReference>
<dbReference type="PANTHER" id="PTHR34697:SF2">
    <property type="entry name" value="PHOSPHATIDYLGLYCEROL LYSYLTRANSFERASE"/>
    <property type="match status" value="1"/>
</dbReference>
<dbReference type="Pfam" id="PF09924">
    <property type="entry name" value="LPG_synthase_C"/>
    <property type="match status" value="1"/>
</dbReference>
<feature type="chain" id="PRO_0000456585" description="MprF-like domain protein Rv1619">
    <location>
        <begin position="1"/>
        <end position="484"/>
    </location>
</feature>
<feature type="topological domain" description="Cytoplasmic" evidence="5">
    <location>
        <begin position="1"/>
        <end position="47"/>
    </location>
</feature>
<feature type="transmembrane region" description="Helical" evidence="1">
    <location>
        <begin position="48"/>
        <end position="68"/>
    </location>
</feature>
<feature type="topological domain" description="Periplasmic" evidence="5">
    <location>
        <begin position="69"/>
        <end position="79"/>
    </location>
</feature>
<feature type="transmembrane region" description="Helical" evidence="1">
    <location>
        <begin position="80"/>
        <end position="100"/>
    </location>
</feature>
<feature type="topological domain" description="Cytoplasmic" evidence="5">
    <location>
        <begin position="101"/>
        <end position="113"/>
    </location>
</feature>
<feature type="transmembrane region" description="Helical" evidence="1">
    <location>
        <begin position="114"/>
        <end position="134"/>
    </location>
</feature>
<feature type="topological domain" description="Periplasmic" evidence="5">
    <location>
        <begin position="135"/>
        <end position="457"/>
    </location>
</feature>
<feature type="transmembrane region" description="Helical" evidence="1">
    <location>
        <begin position="458"/>
        <end position="478"/>
    </location>
</feature>
<feature type="topological domain" description="Cytoplasmic" evidence="5">
    <location>
        <begin position="479"/>
        <end position="484"/>
    </location>
</feature>
<feature type="region of interest" description="MprF-like" evidence="5">
    <location>
        <begin position="135"/>
        <end position="457"/>
    </location>
</feature>
<sequence length="484" mass="52642">MVAAAGEPLNCQRANPEVTVKLPSADVVPRLRGRQRVVVHVDSRTARCVGALALVCAACWLIALLAGDYRHAQWAVAGRLGWSLTVLAAVAFIARGIFLGRPVTAMHATAAGLFLLAGLAAHVLVADLLGEILIAGSGWALMWPTSAHPRPEDLPRVWALINATRADSLAPFAMQAGKSHHFSAAGTAALAYRTRIGYAVVSGDPIGDEAQFPQLVADFAAMCHMHGWRIVVVGCSERRLGLWSDPMVVGQSLRPIPIGRDVVIDVSNFEMTGRRFRNLRQAVKRTHNFGVTTEIVAEQQLDDQRQAELAEVLAASPSGARTDRGFCMNLDGVLEGRYPGIQLIIARDASGRVQGFHRYATAGGGSDMSLDVPWRRRGAPNGIDERLSADMIAAAKDAGVQRLSLAFAAFPDLFGANQLGRLQRVCRALIHILDPLIALESLYRYLRKFHALDERRYVLISMTQVFALALVLLSLEFVPRRRHL</sequence>
<reference key="1">
    <citation type="journal article" date="1998" name="Nature">
        <title>Deciphering the biology of Mycobacterium tuberculosis from the complete genome sequence.</title>
        <authorList>
            <person name="Cole S.T."/>
            <person name="Brosch R."/>
            <person name="Parkhill J."/>
            <person name="Garnier T."/>
            <person name="Churcher C.M."/>
            <person name="Harris D.E."/>
            <person name="Gordon S.V."/>
            <person name="Eiglmeier K."/>
            <person name="Gas S."/>
            <person name="Barry C.E. III"/>
            <person name="Tekaia F."/>
            <person name="Badcock K."/>
            <person name="Basham D."/>
            <person name="Brown D."/>
            <person name="Chillingworth T."/>
            <person name="Connor R."/>
            <person name="Davies R.M."/>
            <person name="Devlin K."/>
            <person name="Feltwell T."/>
            <person name="Gentles S."/>
            <person name="Hamlin N."/>
            <person name="Holroyd S."/>
            <person name="Hornsby T."/>
            <person name="Jagels K."/>
            <person name="Krogh A."/>
            <person name="McLean J."/>
            <person name="Moule S."/>
            <person name="Murphy L.D."/>
            <person name="Oliver S."/>
            <person name="Osborne J."/>
            <person name="Quail M.A."/>
            <person name="Rajandream M.A."/>
            <person name="Rogers J."/>
            <person name="Rutter S."/>
            <person name="Seeger K."/>
            <person name="Skelton S."/>
            <person name="Squares S."/>
            <person name="Squares R."/>
            <person name="Sulston J.E."/>
            <person name="Taylor K."/>
            <person name="Whitehead S."/>
            <person name="Barrell B.G."/>
        </authorList>
    </citation>
    <scope>NUCLEOTIDE SEQUENCE [LARGE SCALE GENOMIC DNA]</scope>
    <source>
        <strain>ATCC 25618 / H37Rv</strain>
    </source>
</reference>
<reference key="2">
    <citation type="journal article" date="2022" name="BMC Microbiol.">
        <title>LysX2 is a Mycobacterium tuberculosis membrane protein with an extracytoplasmic MprF-like domain.</title>
        <authorList>
            <person name="Boldrin F."/>
            <person name="Cioetto Mazzabo L."/>
            <person name="Laneelle M.A."/>
            <person name="Rindi L."/>
            <person name="Segafreddo G."/>
            <person name="Lemassu A."/>
            <person name="Etienne G."/>
            <person name="Conflitti M."/>
            <person name="Daffe M."/>
            <person name="Garzino Demo A."/>
            <person name="Manganelli R."/>
            <person name="Marrakchi H."/>
            <person name="Provvedi R."/>
        </authorList>
    </citation>
    <scope>FUNCTION</scope>
    <scope>SUBCELLULAR LOCATION</scope>
    <scope>TOPOLOGY</scope>
    <scope>DOMAIN</scope>
    <scope>EXPRESSION IN M.SMEGMATIS</scope>
</reference>